<feature type="chain" id="PRO_0000208760" description="Uncharacterized transporter BPP1579">
    <location>
        <begin position="1"/>
        <end position="565"/>
    </location>
</feature>
<feature type="transmembrane region" description="Helical" evidence="1">
    <location>
        <begin position="4"/>
        <end position="26"/>
    </location>
</feature>
<feature type="transmembrane region" description="Helical" evidence="1">
    <location>
        <begin position="33"/>
        <end position="55"/>
    </location>
</feature>
<feature type="transmembrane region" description="Helical" evidence="1">
    <location>
        <begin position="68"/>
        <end position="90"/>
    </location>
</feature>
<feature type="transmembrane region" description="Helical" evidence="1">
    <location>
        <begin position="97"/>
        <end position="119"/>
    </location>
</feature>
<feature type="transmembrane region" description="Helical" evidence="1">
    <location>
        <begin position="162"/>
        <end position="184"/>
    </location>
</feature>
<feature type="transmembrane region" description="Helical" evidence="1">
    <location>
        <begin position="389"/>
        <end position="411"/>
    </location>
</feature>
<feature type="transmembrane region" description="Helical" evidence="1">
    <location>
        <begin position="415"/>
        <end position="432"/>
    </location>
</feature>
<feature type="transmembrane region" description="Helical" evidence="1">
    <location>
        <begin position="453"/>
        <end position="472"/>
    </location>
</feature>
<feature type="transmembrane region" description="Helical" evidence="1">
    <location>
        <begin position="482"/>
        <end position="504"/>
    </location>
</feature>
<feature type="transmembrane region" description="Helical" evidence="1">
    <location>
        <begin position="539"/>
        <end position="561"/>
    </location>
</feature>
<feature type="domain" description="RCK C-terminal 1" evidence="2">
    <location>
        <begin position="210"/>
        <end position="295"/>
    </location>
</feature>
<feature type="domain" description="RCK C-terminal 2" evidence="2">
    <location>
        <begin position="296"/>
        <end position="379"/>
    </location>
</feature>
<organism>
    <name type="scientific">Bordetella parapertussis (strain 12822 / ATCC BAA-587 / NCTC 13253)</name>
    <dbReference type="NCBI Taxonomy" id="257311"/>
    <lineage>
        <taxon>Bacteria</taxon>
        <taxon>Pseudomonadati</taxon>
        <taxon>Pseudomonadota</taxon>
        <taxon>Betaproteobacteria</taxon>
        <taxon>Burkholderiales</taxon>
        <taxon>Alcaligenaceae</taxon>
        <taxon>Bordetella</taxon>
    </lineage>
</organism>
<name>Y1579_BORPA</name>
<reference key="1">
    <citation type="journal article" date="2003" name="Nat. Genet.">
        <title>Comparative analysis of the genome sequences of Bordetella pertussis, Bordetella parapertussis and Bordetella bronchiseptica.</title>
        <authorList>
            <person name="Parkhill J."/>
            <person name="Sebaihia M."/>
            <person name="Preston A."/>
            <person name="Murphy L.D."/>
            <person name="Thomson N.R."/>
            <person name="Harris D.E."/>
            <person name="Holden M.T.G."/>
            <person name="Churcher C.M."/>
            <person name="Bentley S.D."/>
            <person name="Mungall K.L."/>
            <person name="Cerdeno-Tarraga A.-M."/>
            <person name="Temple L."/>
            <person name="James K.D."/>
            <person name="Harris B."/>
            <person name="Quail M.A."/>
            <person name="Achtman M."/>
            <person name="Atkin R."/>
            <person name="Baker S."/>
            <person name="Basham D."/>
            <person name="Bason N."/>
            <person name="Cherevach I."/>
            <person name="Chillingworth T."/>
            <person name="Collins M."/>
            <person name="Cronin A."/>
            <person name="Davis P."/>
            <person name="Doggett J."/>
            <person name="Feltwell T."/>
            <person name="Goble A."/>
            <person name="Hamlin N."/>
            <person name="Hauser H."/>
            <person name="Holroyd S."/>
            <person name="Jagels K."/>
            <person name="Leather S."/>
            <person name="Moule S."/>
            <person name="Norberczak H."/>
            <person name="O'Neil S."/>
            <person name="Ormond D."/>
            <person name="Price C."/>
            <person name="Rabbinowitsch E."/>
            <person name="Rutter S."/>
            <person name="Sanders M."/>
            <person name="Saunders D."/>
            <person name="Seeger K."/>
            <person name="Sharp S."/>
            <person name="Simmonds M."/>
            <person name="Skelton J."/>
            <person name="Squares R."/>
            <person name="Squares S."/>
            <person name="Stevens K."/>
            <person name="Unwin L."/>
            <person name="Whitehead S."/>
            <person name="Barrell B.G."/>
            <person name="Maskell D.J."/>
        </authorList>
    </citation>
    <scope>NUCLEOTIDE SEQUENCE [LARGE SCALE GENOMIC DNA]</scope>
    <source>
        <strain>12822 / ATCC BAA-587 / NCTC 13253</strain>
    </source>
</reference>
<accession>Q7WA16</accession>
<dbReference type="EMBL" id="BX640427">
    <property type="protein sequence ID" value="CAE36881.1"/>
    <property type="molecule type" value="Genomic_DNA"/>
</dbReference>
<dbReference type="RefSeq" id="WP_010928097.1">
    <property type="nucleotide sequence ID" value="NC_002928.3"/>
</dbReference>
<dbReference type="SMR" id="Q7WA16"/>
<dbReference type="GeneID" id="93203338"/>
<dbReference type="KEGG" id="bpa:BPP1579"/>
<dbReference type="HOGENOM" id="CLU_035023_2_2_4"/>
<dbReference type="Proteomes" id="UP000001421">
    <property type="component" value="Chromosome"/>
</dbReference>
<dbReference type="GO" id="GO:0005886">
    <property type="term" value="C:plasma membrane"/>
    <property type="evidence" value="ECO:0007669"/>
    <property type="project" value="UniProtKB-SubCell"/>
</dbReference>
<dbReference type="GO" id="GO:0008324">
    <property type="term" value="F:monoatomic cation transmembrane transporter activity"/>
    <property type="evidence" value="ECO:0007669"/>
    <property type="project" value="InterPro"/>
</dbReference>
<dbReference type="GO" id="GO:0006813">
    <property type="term" value="P:potassium ion transport"/>
    <property type="evidence" value="ECO:0007669"/>
    <property type="project" value="InterPro"/>
</dbReference>
<dbReference type="Gene3D" id="3.30.70.1450">
    <property type="entry name" value="Regulator of K+ conductance, C-terminal domain"/>
    <property type="match status" value="1"/>
</dbReference>
<dbReference type="InterPro" id="IPR050144">
    <property type="entry name" value="AAE_transporter"/>
</dbReference>
<dbReference type="InterPro" id="IPR006037">
    <property type="entry name" value="RCK_C"/>
</dbReference>
<dbReference type="InterPro" id="IPR036721">
    <property type="entry name" value="RCK_C_sf"/>
</dbReference>
<dbReference type="InterPro" id="IPR006512">
    <property type="entry name" value="YidE_YbjL"/>
</dbReference>
<dbReference type="NCBIfam" id="TIGR01625">
    <property type="entry name" value="YidE_YbjL_dupl"/>
    <property type="match status" value="1"/>
</dbReference>
<dbReference type="PANTHER" id="PTHR30445:SF9">
    <property type="match status" value="1"/>
</dbReference>
<dbReference type="PANTHER" id="PTHR30445">
    <property type="entry name" value="K(+)_H(+) ANTIPORTER SUBUNIT KHTT"/>
    <property type="match status" value="1"/>
</dbReference>
<dbReference type="Pfam" id="PF06826">
    <property type="entry name" value="Asp-Al_Ex"/>
    <property type="match status" value="2"/>
</dbReference>
<dbReference type="Pfam" id="PF02080">
    <property type="entry name" value="TrkA_C"/>
    <property type="match status" value="1"/>
</dbReference>
<dbReference type="SUPFAM" id="SSF116726">
    <property type="entry name" value="TrkA C-terminal domain-like"/>
    <property type="match status" value="1"/>
</dbReference>
<dbReference type="PROSITE" id="PS51202">
    <property type="entry name" value="RCK_C"/>
    <property type="match status" value="2"/>
</dbReference>
<proteinExistence type="inferred from homology"/>
<sequence length="565" mass="59298">MQAFVQFLGSNPYILLFLTIGLAVWVGKFSIKGYGLGAVAAAIVVGCLVATVGAAYGVKFHLDEFAKSLLYYLFMYGVGLRVGPSFVNALNKESINYAILAIIAPILGLAIVVLGTQFFGLPLGAAGGMLAGSQTMSAAIGSAEQAVSAGVLSLGSESPEQISAMIALSYGITYIWGTVGIILLCKYLPRIWGVDAKAAALEFEKAHGVPNVDDAGLTAFHPFDLRAYRVENPESIGKTVQQFRTRFPQYQVVNVERGDQLLGPSAETVLQQGDVVALGGRLEEMTANMGMLGPEVPDARALNIPLDQAEILVTNKEVTGRPLKTFRGSELAGQIQLQRVERSGVPLPIGLETTLQKRDVLFVTGLQPAVSKAGEIFGVIARHSSATDLLTLSFGMILGFLIGLIEVPAFGAKVGLGNAGGLLLSGIIVSSISSRLRFFGNTPNAARNILEDLGLIGFVAIVGINAGADLLTQLTGAIALKIFIVGFLASTIPPIIVWAIGFHIMKINPALLMGATAGARSHSGPAREAAKEVGSSVPWLGFPVGYAVSGVLLTVFGYFAMVLAH</sequence>
<comment type="subcellular location">
    <subcellularLocation>
        <location evidence="3">Cell membrane</location>
        <topology evidence="3">Multi-pass membrane protein</topology>
    </subcellularLocation>
</comment>
<comment type="similarity">
    <text evidence="3">Belongs to the AAE transporter (TC 2.A.81) family.</text>
</comment>
<evidence type="ECO:0000255" key="1"/>
<evidence type="ECO:0000255" key="2">
    <source>
        <dbReference type="PROSITE-ProRule" id="PRU00544"/>
    </source>
</evidence>
<evidence type="ECO:0000305" key="3"/>
<protein>
    <recommendedName>
        <fullName>Uncharacterized transporter BPP1579</fullName>
    </recommendedName>
</protein>
<gene>
    <name type="ordered locus">BPP1579</name>
</gene>
<keyword id="KW-1003">Cell membrane</keyword>
<keyword id="KW-0472">Membrane</keyword>
<keyword id="KW-0677">Repeat</keyword>
<keyword id="KW-0812">Transmembrane</keyword>
<keyword id="KW-1133">Transmembrane helix</keyword>
<keyword id="KW-0813">Transport</keyword>